<comment type="function">
    <text evidence="1">Catalyzes a base-exchange reaction in which the polar head group of phosphatidylethanolamine (PE) or phosphatidylcholine (PC) is replaced by L-serine (By similarity). Catalyzes the conversion of phosphatatidylethanolamine and does not act on phosphatidylcholine (By similarity). Can utilize both phosphatidylethanolamine (PE) plasmalogen and diacyl PE as substrate and the latter is six times better utilized, indicating the importance of an ester linkage at the sn-1 position (By similarity). Although it shows no sn-1 fatty acyl preference, exhibits significant preference towards docosahexaenoic acid (22:6n-3) compared with 18:1 or 20:4 at the sn-2 position (By similarity).</text>
</comment>
<comment type="catalytic activity">
    <reaction evidence="1">
        <text>a 1,2-diacyl-sn-glycero-3-phosphoethanolamine + L-serine = a 1,2-diacyl-sn-glycero-3-phospho-L-serine + ethanolamine</text>
        <dbReference type="Rhea" id="RHEA:27606"/>
        <dbReference type="ChEBI" id="CHEBI:33384"/>
        <dbReference type="ChEBI" id="CHEBI:57262"/>
        <dbReference type="ChEBI" id="CHEBI:57603"/>
        <dbReference type="ChEBI" id="CHEBI:64612"/>
        <dbReference type="EC" id="2.7.8.29"/>
    </reaction>
    <physiologicalReaction direction="left-to-right" evidence="1">
        <dbReference type="Rhea" id="RHEA:27607"/>
    </physiologicalReaction>
</comment>
<comment type="catalytic activity">
    <reaction evidence="1">
        <text>1-hexadecanoyl-2-(9Z-octadecenoyl)-sn-glycero-3-phosphoethanolamine + L-serine = 1-hexadecanoyl-2-(9Z-octadecenoyl)-sn-glycero-3-phospho-L-serine + ethanolamine</text>
        <dbReference type="Rhea" id="RHEA:41484"/>
        <dbReference type="ChEBI" id="CHEBI:33384"/>
        <dbReference type="ChEBI" id="CHEBI:57603"/>
        <dbReference type="ChEBI" id="CHEBI:73007"/>
        <dbReference type="ChEBI" id="CHEBI:75029"/>
    </reaction>
    <physiologicalReaction direction="left-to-right" evidence="1">
        <dbReference type="Rhea" id="RHEA:41485"/>
    </physiologicalReaction>
</comment>
<comment type="catalytic activity">
    <reaction evidence="1">
        <text>1-hexadecanoyl-2-(4Z,7Z,10Z,13Z,16Z,19Z-docosahexaenoyl)-sn-glycero-3-phosphoethanolamine + L-serine = 1-hexadecanoyl-2-(4Z,7Z,10Z,13Z,16Z,19Z-docosahexaenoyl)-sn-glycero-3-phosphoserine + ethanolamine</text>
        <dbReference type="Rhea" id="RHEA:41488"/>
        <dbReference type="ChEBI" id="CHEBI:33384"/>
        <dbReference type="ChEBI" id="CHEBI:57603"/>
        <dbReference type="ChEBI" id="CHEBI:78261"/>
        <dbReference type="ChEBI" id="CHEBI:78262"/>
    </reaction>
    <physiologicalReaction direction="left-to-right" evidence="1">
        <dbReference type="Rhea" id="RHEA:41489"/>
    </physiologicalReaction>
</comment>
<comment type="catalytic activity">
    <reaction evidence="1">
        <text>1-octadecanoyl-2-(5Z,8Z,11Z,14Z)-eicosatetraenoyl-sn-glycero-3-phosphoethanolamine + L-serine = 1-octadecanoyl-2-(5Z,8Z,11Z,14Z)-eicosatetraenoyl-sn-glycero-3-phosphoserine + ethanolamine</text>
        <dbReference type="Rhea" id="RHEA:41500"/>
        <dbReference type="ChEBI" id="CHEBI:33384"/>
        <dbReference type="ChEBI" id="CHEBI:57603"/>
        <dbReference type="ChEBI" id="CHEBI:78268"/>
        <dbReference type="ChEBI" id="CHEBI:78269"/>
    </reaction>
    <physiologicalReaction direction="left-to-right" evidence="1">
        <dbReference type="Rhea" id="RHEA:41501"/>
    </physiologicalReaction>
</comment>
<comment type="catalytic activity">
    <reaction evidence="1">
        <text>1-octadecanoyl-2-(4Z,7Z,10Z,13Z,16Z,19Z-docosahexaenoyl)-sn-glycero-3-phosphoethanolamine + L-serine = 1-octadecanoyl-2-(4Z,7Z,10Z,13Z,16Z,19Z-docosahexaenoyl)-sn-glycero-3-phosphoserine + ethanolamine</text>
        <dbReference type="Rhea" id="RHEA:41492"/>
        <dbReference type="ChEBI" id="CHEBI:33384"/>
        <dbReference type="ChEBI" id="CHEBI:57603"/>
        <dbReference type="ChEBI" id="CHEBI:78265"/>
        <dbReference type="ChEBI" id="CHEBI:78266"/>
    </reaction>
    <physiologicalReaction direction="left-to-right" evidence="1">
        <dbReference type="Rhea" id="RHEA:41493"/>
    </physiologicalReaction>
</comment>
<comment type="catalytic activity">
    <reaction evidence="1">
        <text>1-(1Z-octadecenyl)-2-(4Z,7Z,10Z,13Z,16Z,19Z-docosahexaenoyl)-sn-glycero-3-phosphoethanolamine + L-serine = 1-(1Z-octadecenyl)-2-(4Z,7Z,10Z,13Z,16Z,19Z-docosahexaenoyl)-sn-glycero-3-phospho-L-serine + ethanolamine</text>
        <dbReference type="Rhea" id="RHEA:41496"/>
        <dbReference type="ChEBI" id="CHEBI:33384"/>
        <dbReference type="ChEBI" id="CHEBI:57603"/>
        <dbReference type="ChEBI" id="CHEBI:78263"/>
        <dbReference type="ChEBI" id="CHEBI:78264"/>
    </reaction>
    <physiologicalReaction direction="left-to-right" evidence="1">
        <dbReference type="Rhea" id="RHEA:41497"/>
    </physiologicalReaction>
</comment>
<comment type="catalytic activity">
    <reaction evidence="1">
        <text>1-octadecanoyl-2-(9Z-octadecenoyl)-sn-glycero-3-phosphoethanolamine + L-serine = 1-octadecanoyl-2-(9Z-octadecenoyl)-sn-glycero-3-phospho-L-serine + ethanolamine</text>
        <dbReference type="Rhea" id="RHEA:40795"/>
        <dbReference type="ChEBI" id="CHEBI:33384"/>
        <dbReference type="ChEBI" id="CHEBI:57603"/>
        <dbReference type="ChEBI" id="CHEBI:75038"/>
        <dbReference type="ChEBI" id="CHEBI:78260"/>
    </reaction>
    <physiologicalReaction direction="left-to-right" evidence="1">
        <dbReference type="Rhea" id="RHEA:40796"/>
    </physiologicalReaction>
</comment>
<comment type="catalytic activity">
    <reaction evidence="1">
        <text>1-(1Z-octadecenyl)-2-(9Z-octadecenoyl)-sn-glycero-3-phosphoethanolamine + L-serine = 1-(1Z-octadecenyl)-2-(9Z-octadecenoyl)-sn-glycero-3-phospho-L-serine + ethanolamine</text>
        <dbReference type="Rhea" id="RHEA:41600"/>
        <dbReference type="ChEBI" id="CHEBI:33384"/>
        <dbReference type="ChEBI" id="CHEBI:57603"/>
        <dbReference type="ChEBI" id="CHEBI:78340"/>
        <dbReference type="ChEBI" id="CHEBI:78341"/>
    </reaction>
    <physiologicalReaction direction="left-to-right" evidence="1">
        <dbReference type="Rhea" id="RHEA:41601"/>
    </physiologicalReaction>
</comment>
<comment type="catalytic activity">
    <reaction evidence="1">
        <text>1-(1Z-octadecenyl)-2-(5Z,8Z,11Z,14Z- eicosatetraenoyl)-sn-glycero-3-phosphoethanolamine + L-serine = 1-(1Z-octadecenyl)-2-(5Z,8Z,11Z,14Z-eicosatetraenoyl)-sn-glycero-3-phospho-L-serine + ethanolamine</text>
        <dbReference type="Rhea" id="RHEA:41604"/>
        <dbReference type="ChEBI" id="CHEBI:33384"/>
        <dbReference type="ChEBI" id="CHEBI:57603"/>
        <dbReference type="ChEBI" id="CHEBI:78342"/>
        <dbReference type="ChEBI" id="CHEBI:78343"/>
    </reaction>
    <physiologicalReaction direction="left-to-right" evidence="1">
        <dbReference type="Rhea" id="RHEA:41605"/>
    </physiologicalReaction>
</comment>
<comment type="pathway">
    <text>Phospholipid metabolism; phosphatidylserine biosynthesis.</text>
</comment>
<comment type="subcellular location">
    <subcellularLocation>
        <location evidence="1">Endoplasmic reticulum membrane</location>
        <topology evidence="2">Multi-pass membrane protein</topology>
    </subcellularLocation>
    <text evidence="1">Highly enriched in the mitochondria-associated membrane (MAM).</text>
</comment>
<comment type="similarity">
    <text evidence="4">Belongs to the phosphatidyl serine synthase family.</text>
</comment>
<name>PTSS2_DANRE</name>
<sequence>MAKGEWKRSGADDLPLPGRSECEVFDDGTNTFFWRAHTVTVLFILTCALVYVTLLEETPHDTAYNTKRGIVASILVFLCFGVTQAKDGPFTRPHPAYWRFWLCVSVVYELFLIFILFQTVHDGRQFMKYIDPKLGVPLPERGYGGNCLIYDPGHPTDPFHNIWDKMDGFVPAHFLGWYIKTLMIRDWWMCMIISVMFEFLEYSLEHQLPNFSECWWDHWIMDVLVCNGLGIYCGMKTLGWLSMKPYQWQGLWNIPTYKGKIKRIAFQFTPYSWVKFEWRPASNLRRWLAVLGIIFMFLLAELNTFYLKFVMWMPPEHYLVLFRLVFFVNVGGVAMREIYDFMDDPKFHKKLGQQAWIVAAITVTEFLIVVKYDPNTIMLPIPFFITQCWILGIALILVWTLWRFFIRDITLRYKETRRRRQEVSSERDGSSSAPSGRSKLNGSMDSVRHRKS</sequence>
<accession>E7EY42</accession>
<keyword id="KW-0256">Endoplasmic reticulum</keyword>
<keyword id="KW-0444">Lipid biosynthesis</keyword>
<keyword id="KW-0443">Lipid metabolism</keyword>
<keyword id="KW-0472">Membrane</keyword>
<keyword id="KW-0594">Phospholipid biosynthesis</keyword>
<keyword id="KW-1208">Phospholipid metabolism</keyword>
<keyword id="KW-1185">Reference proteome</keyword>
<keyword id="KW-0808">Transferase</keyword>
<keyword id="KW-0812">Transmembrane</keyword>
<keyword id="KW-1133">Transmembrane helix</keyword>
<organism>
    <name type="scientific">Danio rerio</name>
    <name type="common">Zebrafish</name>
    <name type="synonym">Brachydanio rerio</name>
    <dbReference type="NCBI Taxonomy" id="7955"/>
    <lineage>
        <taxon>Eukaryota</taxon>
        <taxon>Metazoa</taxon>
        <taxon>Chordata</taxon>
        <taxon>Craniata</taxon>
        <taxon>Vertebrata</taxon>
        <taxon>Euteleostomi</taxon>
        <taxon>Actinopterygii</taxon>
        <taxon>Neopterygii</taxon>
        <taxon>Teleostei</taxon>
        <taxon>Ostariophysi</taxon>
        <taxon>Cypriniformes</taxon>
        <taxon>Danionidae</taxon>
        <taxon>Danioninae</taxon>
        <taxon>Danio</taxon>
    </lineage>
</organism>
<proteinExistence type="inferred from homology"/>
<gene>
    <name type="primary">ptdss2</name>
    <name type="ORF">si:ch1073-158c2</name>
    <name type="ORF">si:ch1073-279O1</name>
</gene>
<reference key="1">
    <citation type="journal article" date="2013" name="Nature">
        <title>The zebrafish reference genome sequence and its relationship to the human genome.</title>
        <authorList>
            <person name="Howe K."/>
            <person name="Clark M.D."/>
            <person name="Torroja C.F."/>
            <person name="Torrance J."/>
            <person name="Berthelot C."/>
            <person name="Muffato M."/>
            <person name="Collins J.E."/>
            <person name="Humphray S."/>
            <person name="McLaren K."/>
            <person name="Matthews L."/>
            <person name="McLaren S."/>
            <person name="Sealy I."/>
            <person name="Caccamo M."/>
            <person name="Churcher C."/>
            <person name="Scott C."/>
            <person name="Barrett J.C."/>
            <person name="Koch R."/>
            <person name="Rauch G.J."/>
            <person name="White S."/>
            <person name="Chow W."/>
            <person name="Kilian B."/>
            <person name="Quintais L.T."/>
            <person name="Guerra-Assuncao J.A."/>
            <person name="Zhou Y."/>
            <person name="Gu Y."/>
            <person name="Yen J."/>
            <person name="Vogel J.H."/>
            <person name="Eyre T."/>
            <person name="Redmond S."/>
            <person name="Banerjee R."/>
            <person name="Chi J."/>
            <person name="Fu B."/>
            <person name="Langley E."/>
            <person name="Maguire S.F."/>
            <person name="Laird G.K."/>
            <person name="Lloyd D."/>
            <person name="Kenyon E."/>
            <person name="Donaldson S."/>
            <person name="Sehra H."/>
            <person name="Almeida-King J."/>
            <person name="Loveland J."/>
            <person name="Trevanion S."/>
            <person name="Jones M."/>
            <person name="Quail M."/>
            <person name="Willey D."/>
            <person name="Hunt A."/>
            <person name="Burton J."/>
            <person name="Sims S."/>
            <person name="McLay K."/>
            <person name="Plumb B."/>
            <person name="Davis J."/>
            <person name="Clee C."/>
            <person name="Oliver K."/>
            <person name="Clark R."/>
            <person name="Riddle C."/>
            <person name="Elliot D."/>
            <person name="Threadgold G."/>
            <person name="Harden G."/>
            <person name="Ware D."/>
            <person name="Begum S."/>
            <person name="Mortimore B."/>
            <person name="Kerry G."/>
            <person name="Heath P."/>
            <person name="Phillimore B."/>
            <person name="Tracey A."/>
            <person name="Corby N."/>
            <person name="Dunn M."/>
            <person name="Johnson C."/>
            <person name="Wood J."/>
            <person name="Clark S."/>
            <person name="Pelan S."/>
            <person name="Griffiths G."/>
            <person name="Smith M."/>
            <person name="Glithero R."/>
            <person name="Howden P."/>
            <person name="Barker N."/>
            <person name="Lloyd C."/>
            <person name="Stevens C."/>
            <person name="Harley J."/>
            <person name="Holt K."/>
            <person name="Panagiotidis G."/>
            <person name="Lovell J."/>
            <person name="Beasley H."/>
            <person name="Henderson C."/>
            <person name="Gordon D."/>
            <person name="Auger K."/>
            <person name="Wright D."/>
            <person name="Collins J."/>
            <person name="Raisen C."/>
            <person name="Dyer L."/>
            <person name="Leung K."/>
            <person name="Robertson L."/>
            <person name="Ambridge K."/>
            <person name="Leongamornlert D."/>
            <person name="McGuire S."/>
            <person name="Gilderthorp R."/>
            <person name="Griffiths C."/>
            <person name="Manthravadi D."/>
            <person name="Nichol S."/>
            <person name="Barker G."/>
            <person name="Whitehead S."/>
            <person name="Kay M."/>
            <person name="Brown J."/>
            <person name="Murnane C."/>
            <person name="Gray E."/>
            <person name="Humphries M."/>
            <person name="Sycamore N."/>
            <person name="Barker D."/>
            <person name="Saunders D."/>
            <person name="Wallis J."/>
            <person name="Babbage A."/>
            <person name="Hammond S."/>
            <person name="Mashreghi-Mohammadi M."/>
            <person name="Barr L."/>
            <person name="Martin S."/>
            <person name="Wray P."/>
            <person name="Ellington A."/>
            <person name="Matthews N."/>
            <person name="Ellwood M."/>
            <person name="Woodmansey R."/>
            <person name="Clark G."/>
            <person name="Cooper J."/>
            <person name="Tromans A."/>
            <person name="Grafham D."/>
            <person name="Skuce C."/>
            <person name="Pandian R."/>
            <person name="Andrews R."/>
            <person name="Harrison E."/>
            <person name="Kimberley A."/>
            <person name="Garnett J."/>
            <person name="Fosker N."/>
            <person name="Hall R."/>
            <person name="Garner P."/>
            <person name="Kelly D."/>
            <person name="Bird C."/>
            <person name="Palmer S."/>
            <person name="Gehring I."/>
            <person name="Berger A."/>
            <person name="Dooley C.M."/>
            <person name="Ersan-Urun Z."/>
            <person name="Eser C."/>
            <person name="Geiger H."/>
            <person name="Geisler M."/>
            <person name="Karotki L."/>
            <person name="Kirn A."/>
            <person name="Konantz J."/>
            <person name="Konantz M."/>
            <person name="Oberlander M."/>
            <person name="Rudolph-Geiger S."/>
            <person name="Teucke M."/>
            <person name="Lanz C."/>
            <person name="Raddatz G."/>
            <person name="Osoegawa K."/>
            <person name="Zhu B."/>
            <person name="Rapp A."/>
            <person name="Widaa S."/>
            <person name="Langford C."/>
            <person name="Yang F."/>
            <person name="Schuster S.C."/>
            <person name="Carter N.P."/>
            <person name="Harrow J."/>
            <person name="Ning Z."/>
            <person name="Herrero J."/>
            <person name="Searle S.M."/>
            <person name="Enright A."/>
            <person name="Geisler R."/>
            <person name="Plasterk R.H."/>
            <person name="Lee C."/>
            <person name="Westerfield M."/>
            <person name="de Jong P.J."/>
            <person name="Zon L.I."/>
            <person name="Postlethwait J.H."/>
            <person name="Nusslein-Volhard C."/>
            <person name="Hubbard T.J."/>
            <person name="Roest Crollius H."/>
            <person name="Rogers J."/>
            <person name="Stemple D.L."/>
        </authorList>
    </citation>
    <scope>NUCLEOTIDE SEQUENCE [LARGE SCALE GENOMIC DNA]</scope>
    <source>
        <strain>Tuebingen</strain>
    </source>
</reference>
<evidence type="ECO:0000250" key="1">
    <source>
        <dbReference type="UniProtKB" id="Q9Z1X2"/>
    </source>
</evidence>
<evidence type="ECO:0000255" key="2"/>
<evidence type="ECO:0000256" key="3">
    <source>
        <dbReference type="SAM" id="MobiDB-lite"/>
    </source>
</evidence>
<evidence type="ECO:0000305" key="4"/>
<feature type="chain" id="PRO_0000416036" description="Phosphatidylserine synthase 2">
    <location>
        <begin position="1"/>
        <end position="452"/>
    </location>
</feature>
<feature type="topological domain" description="Cytoplasmic" evidence="2">
    <location>
        <begin position="1"/>
        <end position="35"/>
    </location>
</feature>
<feature type="transmembrane region" description="Helical" evidence="2">
    <location>
        <begin position="36"/>
        <end position="56"/>
    </location>
</feature>
<feature type="topological domain" description="Lumenal" evidence="2">
    <location>
        <begin position="57"/>
        <end position="69"/>
    </location>
</feature>
<feature type="transmembrane region" description="Helical" evidence="2">
    <location>
        <begin position="70"/>
        <end position="90"/>
    </location>
</feature>
<feature type="topological domain" description="Cytoplasmic" evidence="2">
    <location>
        <begin position="91"/>
        <end position="99"/>
    </location>
</feature>
<feature type="transmembrane region" description="Helical" evidence="2">
    <location>
        <begin position="100"/>
        <end position="120"/>
    </location>
</feature>
<feature type="topological domain" description="Lumenal" evidence="2">
    <location>
        <begin position="121"/>
        <end position="286"/>
    </location>
</feature>
<feature type="transmembrane region" description="Helical" evidence="2">
    <location>
        <begin position="287"/>
        <end position="307"/>
    </location>
</feature>
<feature type="topological domain" description="Cytoplasmic" evidence="2">
    <location>
        <position position="308"/>
    </location>
</feature>
<feature type="transmembrane region" description="Helical" evidence="2">
    <location>
        <begin position="309"/>
        <end position="329"/>
    </location>
</feature>
<feature type="topological domain" description="Lumenal" evidence="2">
    <location>
        <begin position="330"/>
        <end position="349"/>
    </location>
</feature>
<feature type="transmembrane region" description="Helical" evidence="2">
    <location>
        <begin position="350"/>
        <end position="370"/>
    </location>
</feature>
<feature type="topological domain" description="Cytoplasmic" evidence="2">
    <location>
        <begin position="371"/>
        <end position="376"/>
    </location>
</feature>
<feature type="transmembrane region" description="Helical" evidence="2">
    <location>
        <begin position="377"/>
        <end position="397"/>
    </location>
</feature>
<feature type="topological domain" description="Lumenal" evidence="2">
    <location>
        <begin position="398"/>
        <end position="452"/>
    </location>
</feature>
<feature type="region of interest" description="Disordered" evidence="3">
    <location>
        <begin position="419"/>
        <end position="452"/>
    </location>
</feature>
<feature type="compositionally biased region" description="Polar residues" evidence="3">
    <location>
        <begin position="430"/>
        <end position="444"/>
    </location>
</feature>
<dbReference type="EC" id="2.7.8.29" evidence="1"/>
<dbReference type="EMBL" id="CU633741">
    <property type="status" value="NOT_ANNOTATED_CDS"/>
    <property type="molecule type" value="Genomic_DNA"/>
</dbReference>
<dbReference type="EMBL" id="CU633764">
    <property type="status" value="NOT_ANNOTATED_CDS"/>
    <property type="molecule type" value="Genomic_DNA"/>
</dbReference>
<dbReference type="RefSeq" id="NP_001410741.1">
    <property type="nucleotide sequence ID" value="NM_001423812.1"/>
</dbReference>
<dbReference type="RefSeq" id="XP_001337112.2">
    <property type="nucleotide sequence ID" value="XM_001337076.6"/>
</dbReference>
<dbReference type="SMR" id="E7EY42"/>
<dbReference type="FunCoup" id="E7EY42">
    <property type="interactions" value="437"/>
</dbReference>
<dbReference type="STRING" id="7955.ENSDARP00000138215"/>
<dbReference type="PaxDb" id="7955-ENSDARP00000086456"/>
<dbReference type="PeptideAtlas" id="E7EY42"/>
<dbReference type="Ensembl" id="ENSDART00000161593">
    <property type="protein sequence ID" value="ENSDARP00000138215"/>
    <property type="gene ID" value="ENSDARG00000101018"/>
</dbReference>
<dbReference type="GeneID" id="100004136"/>
<dbReference type="eggNOG" id="KOG2735">
    <property type="taxonomic scope" value="Eukaryota"/>
</dbReference>
<dbReference type="HOGENOM" id="CLU_037661_4_1_1"/>
<dbReference type="InParanoid" id="E7EY42"/>
<dbReference type="OrthoDB" id="10265393at2759"/>
<dbReference type="PhylomeDB" id="E7EY42"/>
<dbReference type="TreeFam" id="TF300012"/>
<dbReference type="Reactome" id="R-DRE-1483101">
    <property type="pathway name" value="Synthesis of PS"/>
</dbReference>
<dbReference type="UniPathway" id="UPA00948"/>
<dbReference type="PRO" id="PR:E7EY42"/>
<dbReference type="Proteomes" id="UP000000437">
    <property type="component" value="Chromosome 25"/>
</dbReference>
<dbReference type="Bgee" id="ENSDARG00000101018">
    <property type="expression patterns" value="Expressed in mature ovarian follicle and 20 other cell types or tissues"/>
</dbReference>
<dbReference type="ExpressionAtlas" id="E7EY42">
    <property type="expression patterns" value="baseline"/>
</dbReference>
<dbReference type="GO" id="GO:0005789">
    <property type="term" value="C:endoplasmic reticulum membrane"/>
    <property type="evidence" value="ECO:0007669"/>
    <property type="project" value="UniProtKB-SubCell"/>
</dbReference>
<dbReference type="GO" id="GO:0106245">
    <property type="term" value="F:L-serine-phosphatidylethanolamine phosphatidyltransferase activity"/>
    <property type="evidence" value="ECO:0007669"/>
    <property type="project" value="UniProtKB-EC"/>
</dbReference>
<dbReference type="GO" id="GO:0006659">
    <property type="term" value="P:phosphatidylserine biosynthetic process"/>
    <property type="evidence" value="ECO:0007669"/>
    <property type="project" value="UniProtKB-UniPathway"/>
</dbReference>
<dbReference type="InterPro" id="IPR004277">
    <property type="entry name" value="PSS"/>
</dbReference>
<dbReference type="PANTHER" id="PTHR15362">
    <property type="entry name" value="PHOSPHATIDYLINOSITOL SYNTHASE"/>
    <property type="match status" value="1"/>
</dbReference>
<dbReference type="PANTHER" id="PTHR15362:SF7">
    <property type="entry name" value="PHOSPHATIDYLSERINE SYNTHASE 2"/>
    <property type="match status" value="1"/>
</dbReference>
<dbReference type="Pfam" id="PF03034">
    <property type="entry name" value="PSS"/>
    <property type="match status" value="1"/>
</dbReference>
<protein>
    <recommendedName>
        <fullName>Phosphatidylserine synthase 2</fullName>
        <shortName>PSS-2</shortName>
        <shortName>PtdSer synthase 2</shortName>
        <ecNumber evidence="1">2.7.8.29</ecNumber>
    </recommendedName>
    <alternativeName>
        <fullName>Serine-exchange enzyme II</fullName>
    </alternativeName>
</protein>